<dbReference type="EMBL" id="AP008226">
    <property type="protein sequence ID" value="BAD70241.1"/>
    <property type="molecule type" value="Genomic_DNA"/>
</dbReference>
<dbReference type="RefSeq" id="WP_008631660.1">
    <property type="nucleotide sequence ID" value="NC_006461.1"/>
</dbReference>
<dbReference type="RefSeq" id="YP_143684.1">
    <property type="nucleotide sequence ID" value="NC_006461.1"/>
</dbReference>
<dbReference type="PDB" id="1VVJ">
    <property type="method" value="X-ray"/>
    <property type="resolution" value="3.44 A"/>
    <property type="chains" value="R5/Y5=1-60"/>
</dbReference>
<dbReference type="PDB" id="1VY4">
    <property type="method" value="X-ray"/>
    <property type="resolution" value="2.60 A"/>
    <property type="chains" value="B5/D5=1-60"/>
</dbReference>
<dbReference type="PDB" id="1VY5">
    <property type="method" value="X-ray"/>
    <property type="resolution" value="2.55 A"/>
    <property type="chains" value="B5/D5=1-60"/>
</dbReference>
<dbReference type="PDB" id="1VY6">
    <property type="method" value="X-ray"/>
    <property type="resolution" value="2.90 A"/>
    <property type="chains" value="B5/D5=1-60"/>
</dbReference>
<dbReference type="PDB" id="1VY7">
    <property type="method" value="X-ray"/>
    <property type="resolution" value="2.80 A"/>
    <property type="chains" value="B5/D5=1-60"/>
</dbReference>
<dbReference type="PDB" id="4L47">
    <property type="method" value="X-ray"/>
    <property type="resolution" value="3.22 A"/>
    <property type="chains" value="R5/Y5=1-60"/>
</dbReference>
<dbReference type="PDB" id="4L71">
    <property type="method" value="X-ray"/>
    <property type="resolution" value="3.90 A"/>
    <property type="chains" value="R5/Y5=1-60"/>
</dbReference>
<dbReference type="PDB" id="4LEL">
    <property type="method" value="X-ray"/>
    <property type="resolution" value="3.90 A"/>
    <property type="chains" value="R5/Y5=1-60"/>
</dbReference>
<dbReference type="PDB" id="4LFZ">
    <property type="method" value="X-ray"/>
    <property type="resolution" value="3.92 A"/>
    <property type="chains" value="R5/Y5=1-60"/>
</dbReference>
<dbReference type="PDB" id="4LNT">
    <property type="method" value="X-ray"/>
    <property type="resolution" value="2.94 A"/>
    <property type="chains" value="R5/Y5=1-60"/>
</dbReference>
<dbReference type="PDB" id="4LSK">
    <property type="method" value="X-ray"/>
    <property type="resolution" value="3.48 A"/>
    <property type="chains" value="R5/Y5=1-60"/>
</dbReference>
<dbReference type="PDB" id="4LT8">
    <property type="method" value="X-ray"/>
    <property type="resolution" value="3.14 A"/>
    <property type="chains" value="R5/Y5=1-60"/>
</dbReference>
<dbReference type="PDB" id="4P6F">
    <property type="method" value="X-ray"/>
    <property type="resolution" value="3.60 A"/>
    <property type="chains" value="R5/Y5=1-60"/>
</dbReference>
<dbReference type="PDB" id="4P70">
    <property type="method" value="X-ray"/>
    <property type="resolution" value="3.68 A"/>
    <property type="chains" value="R5/Y5=1-60"/>
</dbReference>
<dbReference type="PDB" id="4TUA">
    <property type="method" value="X-ray"/>
    <property type="resolution" value="3.60 A"/>
    <property type="chains" value="R5/Y5=1-60"/>
</dbReference>
<dbReference type="PDB" id="4TUB">
    <property type="method" value="X-ray"/>
    <property type="resolution" value="3.60 A"/>
    <property type="chains" value="R5/Y5=1-60"/>
</dbReference>
<dbReference type="PDB" id="4TUC">
    <property type="method" value="X-ray"/>
    <property type="resolution" value="3.60 A"/>
    <property type="chains" value="R5/Y5=1-60"/>
</dbReference>
<dbReference type="PDB" id="4TUD">
    <property type="method" value="X-ray"/>
    <property type="resolution" value="3.60 A"/>
    <property type="chains" value="R5/Y5=1-60"/>
</dbReference>
<dbReference type="PDB" id="4TUE">
    <property type="method" value="X-ray"/>
    <property type="resolution" value="3.50 A"/>
    <property type="chains" value="R5/Y5=1-60"/>
</dbReference>
<dbReference type="PDB" id="4V4P">
    <property type="method" value="X-ray"/>
    <property type="resolution" value="5.50 A"/>
    <property type="chains" value="5=1-60"/>
</dbReference>
<dbReference type="PDB" id="4V4X">
    <property type="method" value="X-ray"/>
    <property type="resolution" value="5.00 A"/>
    <property type="chains" value="B4=1-60"/>
</dbReference>
<dbReference type="PDB" id="4V4Y">
    <property type="method" value="X-ray"/>
    <property type="resolution" value="5.50 A"/>
    <property type="chains" value="B4=1-60"/>
</dbReference>
<dbReference type="PDB" id="4V4Z">
    <property type="method" value="X-ray"/>
    <property type="resolution" value="4.51 A"/>
    <property type="chains" value="B4=1-60"/>
</dbReference>
<dbReference type="PDB" id="4V51">
    <property type="method" value="X-ray"/>
    <property type="resolution" value="2.80 A"/>
    <property type="chains" value="B5/D5=2-60"/>
</dbReference>
<dbReference type="PDB" id="4V5A">
    <property type="method" value="X-ray"/>
    <property type="resolution" value="3.50 A"/>
    <property type="chains" value="B5/D5=2-60"/>
</dbReference>
<dbReference type="PDB" id="4V5C">
    <property type="method" value="X-ray"/>
    <property type="resolution" value="3.30 A"/>
    <property type="chains" value="B5/D5=1-60"/>
</dbReference>
<dbReference type="PDB" id="4V5D">
    <property type="method" value="X-ray"/>
    <property type="resolution" value="3.50 A"/>
    <property type="chains" value="B5/D5=1-60"/>
</dbReference>
<dbReference type="PDB" id="4V5E">
    <property type="method" value="X-ray"/>
    <property type="resolution" value="3.45 A"/>
    <property type="chains" value="B5/D5=1-60"/>
</dbReference>
<dbReference type="PDB" id="4V5F">
    <property type="method" value="X-ray"/>
    <property type="resolution" value="3.60 A"/>
    <property type="chains" value="B5/D5=1-60"/>
</dbReference>
<dbReference type="PDB" id="4V5G">
    <property type="method" value="X-ray"/>
    <property type="resolution" value="3.60 A"/>
    <property type="chains" value="B5/D5=1-60"/>
</dbReference>
<dbReference type="PDB" id="4V5J">
    <property type="method" value="X-ray"/>
    <property type="resolution" value="3.10 A"/>
    <property type="chains" value="B5/D5=1-60"/>
</dbReference>
<dbReference type="PDB" id="4V5K">
    <property type="method" value="X-ray"/>
    <property type="resolution" value="3.20 A"/>
    <property type="chains" value="B5/D5=1-60"/>
</dbReference>
<dbReference type="PDB" id="4V5L">
    <property type="method" value="X-ray"/>
    <property type="resolution" value="3.10 A"/>
    <property type="chains" value="B5=1-60"/>
</dbReference>
<dbReference type="PDB" id="4V5M">
    <property type="method" value="EM"/>
    <property type="resolution" value="7.80 A"/>
    <property type="chains" value="B5=1-60"/>
</dbReference>
<dbReference type="PDB" id="4V5N">
    <property type="method" value="EM"/>
    <property type="resolution" value="7.60 A"/>
    <property type="chains" value="B5=1-60"/>
</dbReference>
<dbReference type="PDB" id="4V5P">
    <property type="method" value="X-ray"/>
    <property type="resolution" value="3.10 A"/>
    <property type="chains" value="B5/D5=1-60"/>
</dbReference>
<dbReference type="PDB" id="4V5Q">
    <property type="method" value="X-ray"/>
    <property type="resolution" value="3.10 A"/>
    <property type="chains" value="B5/D5=1-60"/>
</dbReference>
<dbReference type="PDB" id="4V5R">
    <property type="method" value="X-ray"/>
    <property type="resolution" value="3.10 A"/>
    <property type="chains" value="B5/D5=1-60"/>
</dbReference>
<dbReference type="PDB" id="4V5S">
    <property type="method" value="X-ray"/>
    <property type="resolution" value="3.10 A"/>
    <property type="chains" value="B5/D5=1-60"/>
</dbReference>
<dbReference type="PDB" id="4V68">
    <property type="method" value="EM"/>
    <property type="resolution" value="6.40 A"/>
    <property type="chains" value="B5=2-60"/>
</dbReference>
<dbReference type="PDB" id="4V6A">
    <property type="method" value="X-ray"/>
    <property type="resolution" value="3.10 A"/>
    <property type="chains" value="B5/D5=1-60"/>
</dbReference>
<dbReference type="PDB" id="4V6F">
    <property type="method" value="X-ray"/>
    <property type="resolution" value="3.10 A"/>
    <property type="chains" value="A5/D5=1-60"/>
</dbReference>
<dbReference type="PDB" id="4V6G">
    <property type="method" value="X-ray"/>
    <property type="resolution" value="3.50 A"/>
    <property type="chains" value="B5/D5=1-60"/>
</dbReference>
<dbReference type="PDB" id="4V7J">
    <property type="method" value="X-ray"/>
    <property type="resolution" value="3.30 A"/>
    <property type="chains" value="A5/B5=1-60"/>
</dbReference>
<dbReference type="PDB" id="4V7K">
    <property type="method" value="X-ray"/>
    <property type="resolution" value="3.60 A"/>
    <property type="chains" value="A5/B5=1-60"/>
</dbReference>
<dbReference type="PDB" id="4V7L">
    <property type="method" value="X-ray"/>
    <property type="resolution" value="3.00 A"/>
    <property type="chains" value="B5/D5=1-60"/>
</dbReference>
<dbReference type="PDB" id="4V7M">
    <property type="method" value="X-ray"/>
    <property type="resolution" value="3.45 A"/>
    <property type="chains" value="B5/D5=1-60"/>
</dbReference>
<dbReference type="PDB" id="4V7W">
    <property type="method" value="X-ray"/>
    <property type="resolution" value="3.00 A"/>
    <property type="chains" value="B5/D5=1-60"/>
</dbReference>
<dbReference type="PDB" id="4V7X">
    <property type="method" value="X-ray"/>
    <property type="resolution" value="3.00 A"/>
    <property type="chains" value="B5/D5=1-60"/>
</dbReference>
<dbReference type="PDB" id="4V7Y">
    <property type="method" value="X-ray"/>
    <property type="resolution" value="3.00 A"/>
    <property type="chains" value="B5/D5=1-60"/>
</dbReference>
<dbReference type="PDB" id="4V7Z">
    <property type="method" value="X-ray"/>
    <property type="resolution" value="3.10 A"/>
    <property type="chains" value="B5/D5=1-60"/>
</dbReference>
<dbReference type="PDB" id="4V87">
    <property type="method" value="X-ray"/>
    <property type="resolution" value="3.10 A"/>
    <property type="chains" value="A5/D5=2-60"/>
</dbReference>
<dbReference type="PDB" id="4V8A">
    <property type="method" value="X-ray"/>
    <property type="resolution" value="3.20 A"/>
    <property type="chains" value="A5/B5=1-60"/>
</dbReference>
<dbReference type="PDB" id="4V8B">
    <property type="method" value="X-ray"/>
    <property type="resolution" value="3.00 A"/>
    <property type="chains" value="B5/D5=1-60"/>
</dbReference>
<dbReference type="PDB" id="4V8C">
    <property type="method" value="X-ray"/>
    <property type="resolution" value="3.30 A"/>
    <property type="chains" value="A5/B5=1-60"/>
</dbReference>
<dbReference type="PDB" id="4V8D">
    <property type="method" value="X-ray"/>
    <property type="resolution" value="3.00 A"/>
    <property type="chains" value="B5/D5=1-60"/>
</dbReference>
<dbReference type="PDB" id="4V8E">
    <property type="method" value="X-ray"/>
    <property type="resolution" value="3.30 A"/>
    <property type="chains" value="A5/C5=1-60"/>
</dbReference>
<dbReference type="PDB" id="4V8F">
    <property type="method" value="X-ray"/>
    <property type="resolution" value="3.30 A"/>
    <property type="chains" value="A5/D5=1-60"/>
</dbReference>
<dbReference type="PDB" id="4V8G">
    <property type="method" value="X-ray"/>
    <property type="resolution" value="3.00 A"/>
    <property type="chains" value="B5/D5=1-60"/>
</dbReference>
<dbReference type="PDB" id="4V8H">
    <property type="method" value="X-ray"/>
    <property type="resolution" value="3.10 A"/>
    <property type="chains" value="B5/D5=1-60"/>
</dbReference>
<dbReference type="PDB" id="4V8I">
    <property type="method" value="X-ray"/>
    <property type="resolution" value="2.70 A"/>
    <property type="chains" value="B5/D5=1-60"/>
</dbReference>
<dbReference type="PDB" id="4V8J">
    <property type="method" value="X-ray"/>
    <property type="resolution" value="3.90 A"/>
    <property type="chains" value="B5/D5=1-60"/>
</dbReference>
<dbReference type="PDB" id="4V8N">
    <property type="method" value="X-ray"/>
    <property type="resolution" value="3.10 A"/>
    <property type="chains" value="B5/D5=1-60"/>
</dbReference>
<dbReference type="PDB" id="4V8O">
    <property type="method" value="X-ray"/>
    <property type="resolution" value="3.80 A"/>
    <property type="chains" value="B5=1-60"/>
</dbReference>
<dbReference type="PDB" id="4V8Q">
    <property type="method" value="X-ray"/>
    <property type="resolution" value="3.10 A"/>
    <property type="chains" value="A5=1-60"/>
</dbReference>
<dbReference type="PDB" id="4V8U">
    <property type="method" value="X-ray"/>
    <property type="resolution" value="3.70 A"/>
    <property type="chains" value="B5/D5=1-60"/>
</dbReference>
<dbReference type="PDB" id="4V8X">
    <property type="method" value="X-ray"/>
    <property type="resolution" value="3.35 A"/>
    <property type="chains" value="B5/D5=1-60"/>
</dbReference>
<dbReference type="PDB" id="4V90">
    <property type="method" value="X-ray"/>
    <property type="resolution" value="2.95 A"/>
    <property type="chains" value="B5=2-60"/>
</dbReference>
<dbReference type="PDB" id="4V95">
    <property type="method" value="X-ray"/>
    <property type="resolution" value="3.20 A"/>
    <property type="chains" value="B5/D5=1-60"/>
</dbReference>
<dbReference type="PDB" id="4V97">
    <property type="method" value="X-ray"/>
    <property type="resolution" value="3.52 A"/>
    <property type="chains" value="B5/D5=1-60"/>
</dbReference>
<dbReference type="PDB" id="4V9A">
    <property type="method" value="X-ray"/>
    <property type="resolution" value="3.30 A"/>
    <property type="chains" value="B5/D5=1-60"/>
</dbReference>
<dbReference type="PDB" id="4V9B">
    <property type="method" value="X-ray"/>
    <property type="resolution" value="3.10 A"/>
    <property type="chains" value="B5/D5=1-60"/>
</dbReference>
<dbReference type="PDB" id="4V9H">
    <property type="method" value="X-ray"/>
    <property type="resolution" value="2.86 A"/>
    <property type="chains" value="B5=1-60"/>
</dbReference>
<dbReference type="PDB" id="4V9I">
    <property type="method" value="X-ray"/>
    <property type="resolution" value="3.30 A"/>
    <property type="chains" value="B5/D5=2-60"/>
</dbReference>
<dbReference type="PDB" id="4V9R">
    <property type="method" value="X-ray"/>
    <property type="resolution" value="3.00 A"/>
    <property type="chains" value="B5/D5=1-60"/>
</dbReference>
<dbReference type="PDB" id="4V9S">
    <property type="method" value="X-ray"/>
    <property type="resolution" value="3.10 A"/>
    <property type="chains" value="B5/D5=1-60"/>
</dbReference>
<dbReference type="PDB" id="4W2E">
    <property type="method" value="X-ray"/>
    <property type="resolution" value="2.90 A"/>
    <property type="chains" value="5=1-60"/>
</dbReference>
<dbReference type="PDB" id="4W2F">
    <property type="method" value="X-ray"/>
    <property type="resolution" value="2.40 A"/>
    <property type="chains" value="B5/D5=1-60"/>
</dbReference>
<dbReference type="PDB" id="4W2G">
    <property type="method" value="X-ray"/>
    <property type="resolution" value="2.55 A"/>
    <property type="chains" value="B5/D5=1-60"/>
</dbReference>
<dbReference type="PDB" id="4W2H">
    <property type="method" value="X-ray"/>
    <property type="resolution" value="2.70 A"/>
    <property type="chains" value="B5/D5=1-60"/>
</dbReference>
<dbReference type="PDB" id="4W2I">
    <property type="method" value="X-ray"/>
    <property type="resolution" value="2.70 A"/>
    <property type="chains" value="B5/D5=1-60"/>
</dbReference>
<dbReference type="PDB" id="4W4G">
    <property type="method" value="X-ray"/>
    <property type="resolution" value="3.30 A"/>
    <property type="chains" value="R5/Y5=1-60"/>
</dbReference>
<dbReference type="PDB" id="4WPO">
    <property type="method" value="X-ray"/>
    <property type="resolution" value="2.80 A"/>
    <property type="chains" value="A5/C5=1-60"/>
</dbReference>
<dbReference type="PDB" id="4WQ1">
    <property type="method" value="X-ray"/>
    <property type="resolution" value="3.10 A"/>
    <property type="chains" value="J5/N8=2-60"/>
</dbReference>
<dbReference type="PDB" id="4WQF">
    <property type="method" value="X-ray"/>
    <property type="resolution" value="2.80 A"/>
    <property type="chains" value="A5/C5=1-60"/>
</dbReference>
<dbReference type="PDB" id="4WQR">
    <property type="method" value="X-ray"/>
    <property type="resolution" value="3.15 A"/>
    <property type="chains" value="J5/N8=1-60"/>
</dbReference>
<dbReference type="PDB" id="4WQU">
    <property type="method" value="X-ray"/>
    <property type="resolution" value="2.80 A"/>
    <property type="chains" value="A5/C5=1-60"/>
</dbReference>
<dbReference type="PDB" id="4WQY">
    <property type="method" value="X-ray"/>
    <property type="resolution" value="2.80 A"/>
    <property type="chains" value="A5/C5=1-60"/>
</dbReference>
<dbReference type="PDB" id="4WR6">
    <property type="method" value="X-ray"/>
    <property type="resolution" value="3.05 A"/>
    <property type="chains" value="J5/N8=1-60"/>
</dbReference>
<dbReference type="PDB" id="4WRA">
    <property type="method" value="X-ray"/>
    <property type="resolution" value="3.05 A"/>
    <property type="chains" value="J5/N8=1-60"/>
</dbReference>
<dbReference type="PDB" id="4WRO">
    <property type="method" value="X-ray"/>
    <property type="resolution" value="3.05 A"/>
    <property type="chains" value="N8=1-60"/>
</dbReference>
<dbReference type="PDB" id="4WSD">
    <property type="method" value="X-ray"/>
    <property type="resolution" value="2.95 A"/>
    <property type="chains" value="J5/N8=1-60"/>
</dbReference>
<dbReference type="PDB" id="4WSM">
    <property type="method" value="X-ray"/>
    <property type="resolution" value="3.30 A"/>
    <property type="chains" value="J5/N8=1-60"/>
</dbReference>
<dbReference type="PDB" id="4WT1">
    <property type="method" value="X-ray"/>
    <property type="resolution" value="3.05 A"/>
    <property type="chains" value="J5/N8=1-60"/>
</dbReference>
<dbReference type="PDB" id="4WT8">
    <property type="method" value="X-ray"/>
    <property type="resolution" value="3.40 A"/>
    <property type="chains" value="C6/D6=2-60"/>
</dbReference>
<dbReference type="PDB" id="4WU1">
    <property type="method" value="X-ray"/>
    <property type="resolution" value="3.20 A"/>
    <property type="chains" value="J5/N8=1-60"/>
</dbReference>
<dbReference type="PDB" id="4WZD">
    <property type="method" value="X-ray"/>
    <property type="resolution" value="3.10 A"/>
    <property type="chains" value="J5/N8=1-60"/>
</dbReference>
<dbReference type="PDB" id="4WZO">
    <property type="method" value="X-ray"/>
    <property type="resolution" value="3.30 A"/>
    <property type="chains" value="J5/N8=1-60"/>
</dbReference>
<dbReference type="PDB" id="4Y4O">
    <property type="method" value="X-ray"/>
    <property type="resolution" value="2.30 A"/>
    <property type="chains" value="15/25=1-60"/>
</dbReference>
<dbReference type="PDB" id="4Y4P">
    <property type="method" value="X-ray"/>
    <property type="resolution" value="2.50 A"/>
    <property type="chains" value="15/25=1-60"/>
</dbReference>
<dbReference type="PDB" id="4YPB">
    <property type="method" value="X-ray"/>
    <property type="resolution" value="3.40 A"/>
    <property type="chains" value="R5/Y5=1-60"/>
</dbReference>
<dbReference type="PDB" id="4YZV">
    <property type="method" value="X-ray"/>
    <property type="resolution" value="3.10 A"/>
    <property type="chains" value="R5/Y5=1-60"/>
</dbReference>
<dbReference type="PDB" id="4Z3S">
    <property type="method" value="X-ray"/>
    <property type="resolution" value="2.65 A"/>
    <property type="chains" value="15/25=1-60"/>
</dbReference>
<dbReference type="PDB" id="4Z8C">
    <property type="method" value="X-ray"/>
    <property type="resolution" value="2.90 A"/>
    <property type="chains" value="15/25=1-60"/>
</dbReference>
<dbReference type="PDB" id="4ZER">
    <property type="method" value="X-ray"/>
    <property type="resolution" value="3.10 A"/>
    <property type="chains" value="15/25=2-60"/>
</dbReference>
<dbReference type="PDB" id="4ZSN">
    <property type="method" value="X-ray"/>
    <property type="resolution" value="3.60 A"/>
    <property type="chains" value="R5/Y5=1-60"/>
</dbReference>
<dbReference type="PDB" id="5A9Z">
    <property type="method" value="EM"/>
    <property type="resolution" value="4.70 A"/>
    <property type="chains" value="Ab=4-60"/>
</dbReference>
<dbReference type="PDB" id="5AA0">
    <property type="method" value="EM"/>
    <property type="resolution" value="5.00 A"/>
    <property type="chains" value="Ab=4-60"/>
</dbReference>
<dbReference type="PDB" id="5CZP">
    <property type="method" value="X-ray"/>
    <property type="resolution" value="3.30 A"/>
    <property type="chains" value="R5/Y5=1-60"/>
</dbReference>
<dbReference type="PDB" id="5D8B">
    <property type="method" value="X-ray"/>
    <property type="resolution" value="3.63 A"/>
    <property type="chains" value="UB/Y=1-60"/>
</dbReference>
<dbReference type="PDB" id="5DFE">
    <property type="method" value="X-ray"/>
    <property type="resolution" value="3.10 A"/>
    <property type="chains" value="R5/Y5=1-60"/>
</dbReference>
<dbReference type="PDB" id="5DOX">
    <property type="method" value="X-ray"/>
    <property type="resolution" value="3.10 A"/>
    <property type="chains" value="15/25=1-60"/>
</dbReference>
<dbReference type="PDB" id="5DOY">
    <property type="method" value="X-ray"/>
    <property type="resolution" value="2.60 A"/>
    <property type="chains" value="15/25=1-60"/>
</dbReference>
<dbReference type="PDB" id="5E7K">
    <property type="method" value="X-ray"/>
    <property type="resolution" value="3.20 A"/>
    <property type="chains" value="J5/N8=1-60"/>
</dbReference>
<dbReference type="PDB" id="5E81">
    <property type="method" value="X-ray"/>
    <property type="resolution" value="2.95 A"/>
    <property type="chains" value="J5/N8=1-60"/>
</dbReference>
<dbReference type="PDB" id="5EL4">
    <property type="method" value="X-ray"/>
    <property type="resolution" value="3.15 A"/>
    <property type="chains" value="J5/N8=1-60"/>
</dbReference>
<dbReference type="PDB" id="5EL5">
    <property type="method" value="X-ray"/>
    <property type="resolution" value="3.15 A"/>
    <property type="chains" value="J5/N8=1-60"/>
</dbReference>
<dbReference type="PDB" id="5EL6">
    <property type="method" value="X-ray"/>
    <property type="resolution" value="3.10 A"/>
    <property type="chains" value="J5/N8=1-60"/>
</dbReference>
<dbReference type="PDB" id="5EL7">
    <property type="method" value="X-ray"/>
    <property type="resolution" value="3.15 A"/>
    <property type="chains" value="J5/N8=1-60"/>
</dbReference>
<dbReference type="PDB" id="5F8K">
    <property type="method" value="X-ray"/>
    <property type="resolution" value="2.80 A"/>
    <property type="chains" value="15/25=2-60"/>
</dbReference>
<dbReference type="PDB" id="5FDU">
    <property type="method" value="X-ray"/>
    <property type="resolution" value="2.90 A"/>
    <property type="chains" value="15/25=2-60"/>
</dbReference>
<dbReference type="PDB" id="5FDV">
    <property type="method" value="X-ray"/>
    <property type="resolution" value="2.80 A"/>
    <property type="chains" value="15/25=2-60"/>
</dbReference>
<dbReference type="PDB" id="5HAU">
    <property type="method" value="X-ray"/>
    <property type="resolution" value="3.00 A"/>
    <property type="chains" value="13/23=1-60"/>
</dbReference>
<dbReference type="PDB" id="5HCP">
    <property type="method" value="X-ray"/>
    <property type="resolution" value="2.89 A"/>
    <property type="chains" value="15/25=1-60"/>
</dbReference>
<dbReference type="PDB" id="5HCQ">
    <property type="method" value="X-ray"/>
    <property type="resolution" value="2.80 A"/>
    <property type="chains" value="15/25=1-60"/>
</dbReference>
<dbReference type="PDB" id="5HCR">
    <property type="method" value="X-ray"/>
    <property type="resolution" value="2.80 A"/>
    <property type="chains" value="15/25=1-60"/>
</dbReference>
<dbReference type="PDB" id="5HD1">
    <property type="method" value="X-ray"/>
    <property type="resolution" value="2.70 A"/>
    <property type="chains" value="15/25=1-60"/>
</dbReference>
<dbReference type="PDB" id="5IB7">
    <property type="method" value="X-ray"/>
    <property type="resolution" value="2.99 A"/>
    <property type="chains" value="J5/N8=1-60"/>
</dbReference>
<dbReference type="PDB" id="5IB8">
    <property type="method" value="X-ray"/>
    <property type="resolution" value="3.13 A"/>
    <property type="chains" value="J5/N8=1-60"/>
</dbReference>
<dbReference type="PDB" id="5IBB">
    <property type="method" value="X-ray"/>
    <property type="resolution" value="2.96 A"/>
    <property type="chains" value="J5/N8=1-60"/>
</dbReference>
<dbReference type="PDB" id="5IMQ">
    <property type="method" value="EM"/>
    <property type="resolution" value="3.80 A"/>
    <property type="chains" value="w=1-60"/>
</dbReference>
<dbReference type="PDB" id="5IMR">
    <property type="method" value="EM"/>
    <property type="chains" value="w=1-60"/>
</dbReference>
<dbReference type="PDB" id="5J30">
    <property type="method" value="X-ray"/>
    <property type="resolution" value="3.20 A"/>
    <property type="chains" value="R5/Y5=1-60"/>
</dbReference>
<dbReference type="PDB" id="5J3C">
    <property type="method" value="X-ray"/>
    <property type="resolution" value="3.04 A"/>
    <property type="chains" value="R5/Y5=1-60"/>
</dbReference>
<dbReference type="PDB" id="5J4B">
    <property type="method" value="X-ray"/>
    <property type="resolution" value="2.60 A"/>
    <property type="chains" value="15/25=1-60"/>
</dbReference>
<dbReference type="PDB" id="5J4C">
    <property type="method" value="X-ray"/>
    <property type="resolution" value="2.80 A"/>
    <property type="chains" value="15/25=1-60"/>
</dbReference>
<dbReference type="PDB" id="5J8B">
    <property type="method" value="X-ray"/>
    <property type="resolution" value="2.60 A"/>
    <property type="chains" value="5=1-60"/>
</dbReference>
<dbReference type="PDB" id="5NDJ">
    <property type="method" value="X-ray"/>
    <property type="resolution" value="3.15 A"/>
    <property type="chains" value="J5/N8=1-60"/>
</dbReference>
<dbReference type="PDB" id="5NDK">
    <property type="method" value="X-ray"/>
    <property type="resolution" value="2.95 A"/>
    <property type="chains" value="J5/N8=1-60"/>
</dbReference>
<dbReference type="PDB" id="5OT7">
    <property type="method" value="EM"/>
    <property type="resolution" value="3.80 A"/>
    <property type="chains" value="a=2-60"/>
</dbReference>
<dbReference type="PDB" id="5UQ7">
    <property type="method" value="EM"/>
    <property type="resolution" value="3.50 A"/>
    <property type="chains" value="5=2-60"/>
</dbReference>
<dbReference type="PDB" id="5UQ8">
    <property type="method" value="EM"/>
    <property type="resolution" value="3.20 A"/>
    <property type="chains" value="5=2-60"/>
</dbReference>
<dbReference type="PDB" id="5VP2">
    <property type="method" value="X-ray"/>
    <property type="resolution" value="2.80 A"/>
    <property type="chains" value="15/25=1-60"/>
</dbReference>
<dbReference type="PDB" id="5VPO">
    <property type="method" value="X-ray"/>
    <property type="resolution" value="3.34 A"/>
    <property type="chains" value="R5/Y5=1-60"/>
</dbReference>
<dbReference type="PDB" id="5VPP">
    <property type="method" value="X-ray"/>
    <property type="resolution" value="3.90 A"/>
    <property type="chains" value="R5/Y5=1-60"/>
</dbReference>
<dbReference type="PDB" id="5W4K">
    <property type="method" value="X-ray"/>
    <property type="resolution" value="2.70 A"/>
    <property type="chains" value="15/25=1-60"/>
</dbReference>
<dbReference type="PDB" id="5WIS">
    <property type="method" value="X-ray"/>
    <property type="resolution" value="2.70 A"/>
    <property type="chains" value="15/25=1-60"/>
</dbReference>
<dbReference type="PDB" id="5WIT">
    <property type="method" value="X-ray"/>
    <property type="resolution" value="2.60 A"/>
    <property type="chains" value="15/25=1-60"/>
</dbReference>
<dbReference type="PDB" id="5ZLU">
    <property type="method" value="EM"/>
    <property type="resolution" value="3.60 A"/>
    <property type="chains" value="x=1-60"/>
</dbReference>
<dbReference type="PDB" id="6BUW">
    <property type="method" value="X-ray"/>
    <property type="resolution" value="3.50 A"/>
    <property type="chains" value="R5/Y5=1-60"/>
</dbReference>
<dbReference type="PDB" id="6BZ6">
    <property type="method" value="X-ray"/>
    <property type="resolution" value="3.18 A"/>
    <property type="chains" value="R5/Y5=1-60"/>
</dbReference>
<dbReference type="PDB" id="6BZ7">
    <property type="method" value="X-ray"/>
    <property type="resolution" value="3.68 A"/>
    <property type="chains" value="R5/Y5=1-60"/>
</dbReference>
<dbReference type="PDB" id="6BZ8">
    <property type="method" value="X-ray"/>
    <property type="resolution" value="3.74 A"/>
    <property type="chains" value="R5/Y5=1-60"/>
</dbReference>
<dbReference type="PDB" id="6C5L">
    <property type="method" value="X-ray"/>
    <property type="resolution" value="3.20 A"/>
    <property type="chains" value="B5/D5=1-60"/>
</dbReference>
<dbReference type="PDB" id="6CAE">
    <property type="method" value="X-ray"/>
    <property type="resolution" value="2.60 A"/>
    <property type="chains" value="15/25=1-60"/>
</dbReference>
<dbReference type="PDB" id="6CFJ">
    <property type="method" value="X-ray"/>
    <property type="resolution" value="2.80 A"/>
    <property type="chains" value="15/25=1-60"/>
</dbReference>
<dbReference type="PDB" id="6CFK">
    <property type="method" value="X-ray"/>
    <property type="resolution" value="2.70 A"/>
    <property type="chains" value="15/25=1-60"/>
</dbReference>
<dbReference type="PDB" id="6CFL">
    <property type="method" value="X-ray"/>
    <property type="resolution" value="2.60 A"/>
    <property type="chains" value="15/25=1-60"/>
</dbReference>
<dbReference type="PDB" id="6CZR">
    <property type="method" value="X-ray"/>
    <property type="resolution" value="3.14 A"/>
    <property type="chains" value="15/25=2-60"/>
</dbReference>
<dbReference type="PDB" id="6FKR">
    <property type="method" value="X-ray"/>
    <property type="resolution" value="3.20 A"/>
    <property type="chains" value="15/25=2-60"/>
</dbReference>
<dbReference type="PDB" id="6GSJ">
    <property type="method" value="X-ray"/>
    <property type="resolution" value="2.96 A"/>
    <property type="chains" value="J5/N8=1-60"/>
</dbReference>
<dbReference type="PDB" id="6GSK">
    <property type="method" value="X-ray"/>
    <property type="resolution" value="3.36 A"/>
    <property type="chains" value="J5/N8=1-60"/>
</dbReference>
<dbReference type="PDB" id="6GSL">
    <property type="method" value="X-ray"/>
    <property type="resolution" value="3.16 A"/>
    <property type="chains" value="J5/N8=1-60"/>
</dbReference>
<dbReference type="PDB" id="6GZQ">
    <property type="method" value="EM"/>
    <property type="resolution" value="3.28 A"/>
    <property type="chains" value="a1=2-60"/>
</dbReference>
<dbReference type="PDB" id="6GZX">
    <property type="method" value="EM"/>
    <property type="resolution" value="4.57 A"/>
    <property type="chains" value="a1/a2=2-60"/>
</dbReference>
<dbReference type="PDB" id="6GZZ">
    <property type="method" value="EM"/>
    <property type="resolution" value="4.13 A"/>
    <property type="chains" value="a1/a2=2-60"/>
</dbReference>
<dbReference type="PDB" id="6N1D">
    <property type="method" value="X-ray"/>
    <property type="resolution" value="3.20 A"/>
    <property type="chains" value="AL32/BL32=2-60"/>
</dbReference>
<dbReference type="PDB" id="6N9E">
    <property type="method" value="X-ray"/>
    <property type="resolution" value="3.70 A"/>
    <property type="chains" value="15/25=1-60"/>
</dbReference>
<dbReference type="PDB" id="6N9F">
    <property type="method" value="X-ray"/>
    <property type="resolution" value="3.70 A"/>
    <property type="chains" value="15/25=1-60"/>
</dbReference>
<dbReference type="PDB" id="6ND5">
    <property type="method" value="X-ray"/>
    <property type="resolution" value="2.60 A"/>
    <property type="chains" value="15/25=1-60"/>
</dbReference>
<dbReference type="PDB" id="6ND6">
    <property type="method" value="X-ray"/>
    <property type="resolution" value="2.85 A"/>
    <property type="chains" value="15/25=1-60"/>
</dbReference>
<dbReference type="PDB" id="6NDK">
    <property type="method" value="X-ray"/>
    <property type="resolution" value="3.64 A"/>
    <property type="chains" value="R5/Y5=1-60"/>
</dbReference>
<dbReference type="PDB" id="6NSH">
    <property type="method" value="X-ray"/>
    <property type="resolution" value="3.40 A"/>
    <property type="chains" value="R5/Y5=1-60"/>
</dbReference>
<dbReference type="PDB" id="6NTA">
    <property type="method" value="X-ray"/>
    <property type="resolution" value="3.10 A"/>
    <property type="chains" value="R5/Y5=1-60"/>
</dbReference>
<dbReference type="PDB" id="6NUO">
    <property type="method" value="X-ray"/>
    <property type="resolution" value="3.20 A"/>
    <property type="chains" value="R5/Y5=1-60"/>
</dbReference>
<dbReference type="PDB" id="6NWY">
    <property type="method" value="X-ray"/>
    <property type="resolution" value="3.50 A"/>
    <property type="chains" value="R5/Y5=1-60"/>
</dbReference>
<dbReference type="PDB" id="6O3M">
    <property type="method" value="X-ray"/>
    <property type="resolution" value="3.97 A"/>
    <property type="chains" value="R5/Y5=1-60"/>
</dbReference>
<dbReference type="PDB" id="6O97">
    <property type="method" value="X-ray"/>
    <property type="resolution" value="2.75 A"/>
    <property type="chains" value="15/25=1-60"/>
</dbReference>
<dbReference type="PDB" id="6OF1">
    <property type="method" value="X-ray"/>
    <property type="resolution" value="2.80 A"/>
    <property type="chains" value="15/25=1-60"/>
</dbReference>
<dbReference type="PDB" id="6OF6">
    <property type="method" value="X-ray"/>
    <property type="resolution" value="3.20 A"/>
    <property type="chains" value="R5/Y5=1-60"/>
</dbReference>
<dbReference type="PDB" id="6OJ2">
    <property type="method" value="X-ray"/>
    <property type="resolution" value="3.20 A"/>
    <property type="chains" value="R5/Y5=1-60"/>
</dbReference>
<dbReference type="PDB" id="6OPE">
    <property type="method" value="X-ray"/>
    <property type="resolution" value="3.10 A"/>
    <property type="chains" value="R5/Y5=1-60"/>
</dbReference>
<dbReference type="PDB" id="6ORD">
    <property type="method" value="X-ray"/>
    <property type="resolution" value="3.10 A"/>
    <property type="chains" value="R5/Y5=1-60"/>
</dbReference>
<dbReference type="PDB" id="6OSI">
    <property type="method" value="X-ray"/>
    <property type="resolution" value="4.14 A"/>
    <property type="chains" value="R5/Y5=1-60"/>
</dbReference>
<dbReference type="PDB" id="6OTR">
    <property type="method" value="X-ray"/>
    <property type="resolution" value="3.12 A"/>
    <property type="chains" value="R5/Y5=1-60"/>
</dbReference>
<dbReference type="PDB" id="6OXA">
    <property type="method" value="X-ray"/>
    <property type="resolution" value="3.25 A"/>
    <property type="chains" value="R5/Y5=1-60"/>
</dbReference>
<dbReference type="PDB" id="6OXI">
    <property type="method" value="X-ray"/>
    <property type="resolution" value="3.50 A"/>
    <property type="chains" value="R5/Y5=1-60"/>
</dbReference>
<dbReference type="PDB" id="6Q95">
    <property type="method" value="EM"/>
    <property type="resolution" value="3.70 A"/>
    <property type="chains" value="b=2-60"/>
</dbReference>
<dbReference type="PDB" id="6QNQ">
    <property type="method" value="X-ray"/>
    <property type="resolution" value="3.50 A"/>
    <property type="chains" value="J5/N8=1-60"/>
</dbReference>
<dbReference type="PDB" id="6QNR">
    <property type="method" value="X-ray"/>
    <property type="resolution" value="3.10 A"/>
    <property type="chains" value="J5/N8=1-60"/>
</dbReference>
<dbReference type="PDB" id="6UCQ">
    <property type="method" value="X-ray"/>
    <property type="resolution" value="3.50 A"/>
    <property type="chains" value="15/25=1-60"/>
</dbReference>
<dbReference type="PDB" id="6UO1">
    <property type="method" value="X-ray"/>
    <property type="resolution" value="2.95 A"/>
    <property type="chains" value="15/25=1-60"/>
</dbReference>
<dbReference type="PDB" id="6XHV">
    <property type="method" value="X-ray"/>
    <property type="resolution" value="2.40 A"/>
    <property type="chains" value="15/25=1-60"/>
</dbReference>
<dbReference type="PDB" id="6XHW">
    <property type="method" value="X-ray"/>
    <property type="resolution" value="2.50 A"/>
    <property type="chains" value="15/25=1-60"/>
</dbReference>
<dbReference type="PDB" id="6XHX">
    <property type="method" value="X-ray"/>
    <property type="resolution" value="2.55 A"/>
    <property type="chains" value="15/25=1-60"/>
</dbReference>
<dbReference type="PDB" id="6XHY">
    <property type="method" value="X-ray"/>
    <property type="resolution" value="2.60 A"/>
    <property type="chains" value="15/25=1-60"/>
</dbReference>
<dbReference type="PDB" id="6XQD">
    <property type="method" value="X-ray"/>
    <property type="resolution" value="2.80 A"/>
    <property type="chains" value="15/25=1-60"/>
</dbReference>
<dbReference type="PDB" id="6XQE">
    <property type="method" value="X-ray"/>
    <property type="resolution" value="3.00 A"/>
    <property type="chains" value="15/25=1-60"/>
</dbReference>
<dbReference type="PDB" id="7AZO">
    <property type="method" value="X-ray"/>
    <property type="resolution" value="3.30 A"/>
    <property type="chains" value="L32A/L32B=1-60"/>
</dbReference>
<dbReference type="PDB" id="7AZS">
    <property type="method" value="X-ray"/>
    <property type="resolution" value="3.10 A"/>
    <property type="chains" value="L32A/L32B=1-60"/>
</dbReference>
<dbReference type="PDB" id="7JQL">
    <property type="method" value="X-ray"/>
    <property type="resolution" value="3.00 A"/>
    <property type="chains" value="15/25=1-60"/>
</dbReference>
<dbReference type="PDB" id="7JQM">
    <property type="method" value="X-ray"/>
    <property type="resolution" value="3.05 A"/>
    <property type="chains" value="15/25=1-60"/>
</dbReference>
<dbReference type="PDB" id="7LH5">
    <property type="method" value="X-ray"/>
    <property type="resolution" value="3.27 A"/>
    <property type="chains" value="B5/D5=1-60"/>
</dbReference>
<dbReference type="PDB" id="7MD7">
    <property type="method" value="X-ray"/>
    <property type="resolution" value="2.80 A"/>
    <property type="chains" value="15/25=1-60"/>
</dbReference>
<dbReference type="PDB" id="7RQ8">
    <property type="method" value="X-ray"/>
    <property type="resolution" value="2.50 A"/>
    <property type="chains" value="15/25=1-60"/>
</dbReference>
<dbReference type="PDB" id="7RQ9">
    <property type="method" value="X-ray"/>
    <property type="resolution" value="2.60 A"/>
    <property type="chains" value="15/25=1-60"/>
</dbReference>
<dbReference type="PDB" id="7RQA">
    <property type="method" value="X-ray"/>
    <property type="resolution" value="2.40 A"/>
    <property type="chains" value="15/25=1-60"/>
</dbReference>
<dbReference type="PDB" id="7RQB">
    <property type="method" value="X-ray"/>
    <property type="resolution" value="2.45 A"/>
    <property type="chains" value="15/25=1-60"/>
</dbReference>
<dbReference type="PDB" id="7RQC">
    <property type="method" value="X-ray"/>
    <property type="resolution" value="2.50 A"/>
    <property type="chains" value="15/25=1-60"/>
</dbReference>
<dbReference type="PDB" id="7RQD">
    <property type="method" value="X-ray"/>
    <property type="resolution" value="2.50 A"/>
    <property type="chains" value="15/25=1-60"/>
</dbReference>
<dbReference type="PDB" id="7RQE">
    <property type="method" value="X-ray"/>
    <property type="resolution" value="2.40 A"/>
    <property type="chains" value="15/25=1-60"/>
</dbReference>
<dbReference type="PDB" id="7U2H">
    <property type="method" value="X-ray"/>
    <property type="resolution" value="2.55 A"/>
    <property type="chains" value="15/25=1-60"/>
</dbReference>
<dbReference type="PDB" id="7U2I">
    <property type="method" value="X-ray"/>
    <property type="resolution" value="2.55 A"/>
    <property type="chains" value="15/25=1-60"/>
</dbReference>
<dbReference type="PDB" id="7U2J">
    <property type="method" value="X-ray"/>
    <property type="resolution" value="2.55 A"/>
    <property type="chains" value="15/25=1-60"/>
</dbReference>
<dbReference type="PDB" id="8CVJ">
    <property type="method" value="X-ray"/>
    <property type="resolution" value="2.40 A"/>
    <property type="chains" value="15/25=1-60"/>
</dbReference>
<dbReference type="PDB" id="8CVK">
    <property type="method" value="X-ray"/>
    <property type="resolution" value="2.50 A"/>
    <property type="chains" value="15/25=1-60"/>
</dbReference>
<dbReference type="PDB" id="8CVL">
    <property type="method" value="X-ray"/>
    <property type="resolution" value="2.30 A"/>
    <property type="chains" value="15/25=1-60"/>
</dbReference>
<dbReference type="PDB" id="8EKB">
    <property type="method" value="X-ray"/>
    <property type="resolution" value="2.70 A"/>
    <property type="chains" value="15/25=1-60"/>
</dbReference>
<dbReference type="PDB" id="8EV6">
    <property type="method" value="X-ray"/>
    <property type="resolution" value="2.95 A"/>
    <property type="chains" value="15/25=1-60"/>
</dbReference>
<dbReference type="PDB" id="8EV7">
    <property type="method" value="X-ray"/>
    <property type="resolution" value="2.89 A"/>
    <property type="chains" value="15/25=1-60"/>
</dbReference>
<dbReference type="PDB" id="8FC1">
    <property type="method" value="X-ray"/>
    <property type="resolution" value="2.50 A"/>
    <property type="chains" value="15/25=1-60"/>
</dbReference>
<dbReference type="PDB" id="8FC2">
    <property type="method" value="X-ray"/>
    <property type="resolution" value="2.50 A"/>
    <property type="chains" value="15/25=1-60"/>
</dbReference>
<dbReference type="PDB" id="8FC3">
    <property type="method" value="X-ray"/>
    <property type="resolution" value="2.60 A"/>
    <property type="chains" value="15/25=1-60"/>
</dbReference>
<dbReference type="PDB" id="8FC4">
    <property type="method" value="X-ray"/>
    <property type="resolution" value="2.45 A"/>
    <property type="chains" value="15/25=1-60"/>
</dbReference>
<dbReference type="PDB" id="8FC5">
    <property type="method" value="X-ray"/>
    <property type="resolution" value="2.65 A"/>
    <property type="chains" value="15/25=1-60"/>
</dbReference>
<dbReference type="PDB" id="8FC6">
    <property type="method" value="X-ray"/>
    <property type="resolution" value="2.35 A"/>
    <property type="chains" value="15/25=1-60"/>
</dbReference>
<dbReference type="PDB" id="8FOM">
    <property type="method" value="X-ray"/>
    <property type="resolution" value="3.58 A"/>
    <property type="chains" value="R5/Y5=1-60"/>
</dbReference>
<dbReference type="PDB" id="8FON">
    <property type="method" value="X-ray"/>
    <property type="resolution" value="3.64 A"/>
    <property type="chains" value="R5/Y5=1-60"/>
</dbReference>
<dbReference type="PDB" id="8G29">
    <property type="method" value="X-ray"/>
    <property type="resolution" value="2.55 A"/>
    <property type="chains" value="15/25=1-60"/>
</dbReference>
<dbReference type="PDB" id="8G2A">
    <property type="method" value="X-ray"/>
    <property type="resolution" value="2.45 A"/>
    <property type="chains" value="15/25=1-60"/>
</dbReference>
<dbReference type="PDB" id="8G2B">
    <property type="method" value="X-ray"/>
    <property type="resolution" value="2.55 A"/>
    <property type="chains" value="15/25=1-60"/>
</dbReference>
<dbReference type="PDB" id="8G2C">
    <property type="method" value="X-ray"/>
    <property type="resolution" value="2.65 A"/>
    <property type="chains" value="15/25=1-60"/>
</dbReference>
<dbReference type="PDB" id="8G2D">
    <property type="method" value="X-ray"/>
    <property type="resolution" value="2.70 A"/>
    <property type="chains" value="15/25=1-60"/>
</dbReference>
<dbReference type="PDB" id="8T8B">
    <property type="method" value="X-ray"/>
    <property type="resolution" value="2.65 A"/>
    <property type="chains" value="15/25=1-60"/>
</dbReference>
<dbReference type="PDB" id="8T8C">
    <property type="method" value="X-ray"/>
    <property type="resolution" value="2.60 A"/>
    <property type="chains" value="15/25=1-60"/>
</dbReference>
<dbReference type="PDB" id="8UD6">
    <property type="method" value="X-ray"/>
    <property type="resolution" value="2.70 A"/>
    <property type="chains" value="15/25=1-60"/>
</dbReference>
<dbReference type="PDB" id="8UD7">
    <property type="method" value="X-ray"/>
    <property type="resolution" value="2.55 A"/>
    <property type="chains" value="15/25=1-60"/>
</dbReference>
<dbReference type="PDB" id="8UD8">
    <property type="method" value="X-ray"/>
    <property type="resolution" value="2.60 A"/>
    <property type="chains" value="15/25=1-60"/>
</dbReference>
<dbReference type="PDB" id="8UVR">
    <property type="method" value="X-ray"/>
    <property type="resolution" value="2.60 A"/>
    <property type="chains" value="15/25=1-60"/>
</dbReference>
<dbReference type="PDB" id="8UVS">
    <property type="method" value="X-ray"/>
    <property type="resolution" value="2.75 A"/>
    <property type="chains" value="15/25=1-60"/>
</dbReference>
<dbReference type="PDB" id="8VTU">
    <property type="method" value="X-ray"/>
    <property type="resolution" value="2.40 A"/>
    <property type="chains" value="15/25=1-60"/>
</dbReference>
<dbReference type="PDB" id="8VTV">
    <property type="method" value="X-ray"/>
    <property type="resolution" value="2.55 A"/>
    <property type="chains" value="15/25=1-60"/>
</dbReference>
<dbReference type="PDB" id="8VTW">
    <property type="method" value="X-ray"/>
    <property type="resolution" value="2.35 A"/>
    <property type="chains" value="15/25=1-60"/>
</dbReference>
<dbReference type="PDB" id="8VTX">
    <property type="method" value="X-ray"/>
    <property type="resolution" value="2.40 A"/>
    <property type="chains" value="15/25=1-60"/>
</dbReference>
<dbReference type="PDB" id="8VTY">
    <property type="method" value="X-ray"/>
    <property type="resolution" value="2.60 A"/>
    <property type="chains" value="15/25=1-60"/>
</dbReference>
<dbReference type="PDB" id="8WV1">
    <property type="method" value="X-ray"/>
    <property type="resolution" value="3.99 A"/>
    <property type="chains" value="0/5=1-60"/>
</dbReference>
<dbReference type="PDB" id="9B00">
    <property type="method" value="X-ray"/>
    <property type="resolution" value="2.80 A"/>
    <property type="chains" value="15/25=1-60"/>
</dbReference>
<dbReference type="PDB" id="9D0J">
    <property type="method" value="X-ray"/>
    <property type="resolution" value="2.50 A"/>
    <property type="chains" value="15/25=1-60"/>
</dbReference>
<dbReference type="PDB" id="9D7R">
    <property type="method" value="X-ray"/>
    <property type="resolution" value="2.70 A"/>
    <property type="chains" value="15/25=1-60"/>
</dbReference>
<dbReference type="PDB" id="9D7S">
    <property type="method" value="X-ray"/>
    <property type="resolution" value="2.85 A"/>
    <property type="chains" value="15/25=1-60"/>
</dbReference>
<dbReference type="PDB" id="9D7T">
    <property type="method" value="X-ray"/>
    <property type="resolution" value="2.70 A"/>
    <property type="chains" value="15/25=1-60"/>
</dbReference>
<dbReference type="PDB" id="9DFC">
    <property type="method" value="X-ray"/>
    <property type="resolution" value="2.50 A"/>
    <property type="chains" value="15/25=1-60"/>
</dbReference>
<dbReference type="PDB" id="9DFD">
    <property type="method" value="X-ray"/>
    <property type="resolution" value="2.60 A"/>
    <property type="chains" value="15/25=1-60"/>
</dbReference>
<dbReference type="PDB" id="9DFE">
    <property type="method" value="X-ray"/>
    <property type="resolution" value="2.60 A"/>
    <property type="chains" value="15/25=1-60"/>
</dbReference>
<dbReference type="PDBsum" id="1VVJ"/>
<dbReference type="PDBsum" id="1VY4"/>
<dbReference type="PDBsum" id="1VY5"/>
<dbReference type="PDBsum" id="1VY6"/>
<dbReference type="PDBsum" id="1VY7"/>
<dbReference type="PDBsum" id="4L47"/>
<dbReference type="PDBsum" id="4L71"/>
<dbReference type="PDBsum" id="4LEL"/>
<dbReference type="PDBsum" id="4LFZ"/>
<dbReference type="PDBsum" id="4LNT"/>
<dbReference type="PDBsum" id="4LSK"/>
<dbReference type="PDBsum" id="4LT8"/>
<dbReference type="PDBsum" id="4P6F"/>
<dbReference type="PDBsum" id="4P70"/>
<dbReference type="PDBsum" id="4TUA"/>
<dbReference type="PDBsum" id="4TUB"/>
<dbReference type="PDBsum" id="4TUC"/>
<dbReference type="PDBsum" id="4TUD"/>
<dbReference type="PDBsum" id="4TUE"/>
<dbReference type="PDBsum" id="4V4P"/>
<dbReference type="PDBsum" id="4V4X"/>
<dbReference type="PDBsum" id="4V4Y"/>
<dbReference type="PDBsum" id="4V4Z"/>
<dbReference type="PDBsum" id="4V51"/>
<dbReference type="PDBsum" id="4V5A"/>
<dbReference type="PDBsum" id="4V5C"/>
<dbReference type="PDBsum" id="4V5D"/>
<dbReference type="PDBsum" id="4V5E"/>
<dbReference type="PDBsum" id="4V5F"/>
<dbReference type="PDBsum" id="4V5G"/>
<dbReference type="PDBsum" id="4V5J"/>
<dbReference type="PDBsum" id="4V5K"/>
<dbReference type="PDBsum" id="4V5L"/>
<dbReference type="PDBsum" id="4V5M"/>
<dbReference type="PDBsum" id="4V5N"/>
<dbReference type="PDBsum" id="4V5P"/>
<dbReference type="PDBsum" id="4V5Q"/>
<dbReference type="PDBsum" id="4V5R"/>
<dbReference type="PDBsum" id="4V5S"/>
<dbReference type="PDBsum" id="4V68"/>
<dbReference type="PDBsum" id="4V6A"/>
<dbReference type="PDBsum" id="4V6F"/>
<dbReference type="PDBsum" id="4V6G"/>
<dbReference type="PDBsum" id="4V7J"/>
<dbReference type="PDBsum" id="4V7K"/>
<dbReference type="PDBsum" id="4V7L"/>
<dbReference type="PDBsum" id="4V7M"/>
<dbReference type="PDBsum" id="4V7W"/>
<dbReference type="PDBsum" id="4V7X"/>
<dbReference type="PDBsum" id="4V7Y"/>
<dbReference type="PDBsum" id="4V7Z"/>
<dbReference type="PDBsum" id="4V87"/>
<dbReference type="PDBsum" id="4V8A"/>
<dbReference type="PDBsum" id="4V8B"/>
<dbReference type="PDBsum" id="4V8C"/>
<dbReference type="PDBsum" id="4V8D"/>
<dbReference type="PDBsum" id="4V8E"/>
<dbReference type="PDBsum" id="4V8F"/>
<dbReference type="PDBsum" id="4V8G"/>
<dbReference type="PDBsum" id="4V8H"/>
<dbReference type="PDBsum" id="4V8I"/>
<dbReference type="PDBsum" id="4V8J"/>
<dbReference type="PDBsum" id="4V8N"/>
<dbReference type="PDBsum" id="4V8O"/>
<dbReference type="PDBsum" id="4V8Q"/>
<dbReference type="PDBsum" id="4V8U"/>
<dbReference type="PDBsum" id="4V8X"/>
<dbReference type="PDBsum" id="4V90"/>
<dbReference type="PDBsum" id="4V95"/>
<dbReference type="PDBsum" id="4V97"/>
<dbReference type="PDBsum" id="4V9A"/>
<dbReference type="PDBsum" id="4V9B"/>
<dbReference type="PDBsum" id="4V9H"/>
<dbReference type="PDBsum" id="4V9I"/>
<dbReference type="PDBsum" id="4V9R"/>
<dbReference type="PDBsum" id="4V9S"/>
<dbReference type="PDBsum" id="4W2E"/>
<dbReference type="PDBsum" id="4W2F"/>
<dbReference type="PDBsum" id="4W2G"/>
<dbReference type="PDBsum" id="4W2H"/>
<dbReference type="PDBsum" id="4W2I"/>
<dbReference type="PDBsum" id="4W4G"/>
<dbReference type="PDBsum" id="4WPO"/>
<dbReference type="PDBsum" id="4WQ1"/>
<dbReference type="PDBsum" id="4WQF"/>
<dbReference type="PDBsum" id="4WQR"/>
<dbReference type="PDBsum" id="4WQU"/>
<dbReference type="PDBsum" id="4WQY"/>
<dbReference type="PDBsum" id="4WR6"/>
<dbReference type="PDBsum" id="4WRA"/>
<dbReference type="PDBsum" id="4WRO"/>
<dbReference type="PDBsum" id="4WSD"/>
<dbReference type="PDBsum" id="4WSM"/>
<dbReference type="PDBsum" id="4WT1"/>
<dbReference type="PDBsum" id="4WT8"/>
<dbReference type="PDBsum" id="4WU1"/>
<dbReference type="PDBsum" id="4WZD"/>
<dbReference type="PDBsum" id="4WZO"/>
<dbReference type="PDBsum" id="4Y4O"/>
<dbReference type="PDBsum" id="4Y4P"/>
<dbReference type="PDBsum" id="4YPB"/>
<dbReference type="PDBsum" id="4YZV"/>
<dbReference type="PDBsum" id="4Z3S"/>
<dbReference type="PDBsum" id="4Z8C"/>
<dbReference type="PDBsum" id="4ZER"/>
<dbReference type="PDBsum" id="4ZSN"/>
<dbReference type="PDBsum" id="5A9Z"/>
<dbReference type="PDBsum" id="5AA0"/>
<dbReference type="PDBsum" id="5CZP"/>
<dbReference type="PDBsum" id="5D8B"/>
<dbReference type="PDBsum" id="5DFE"/>
<dbReference type="PDBsum" id="5DOX"/>
<dbReference type="PDBsum" id="5DOY"/>
<dbReference type="PDBsum" id="5E7K"/>
<dbReference type="PDBsum" id="5E81"/>
<dbReference type="PDBsum" id="5EL4"/>
<dbReference type="PDBsum" id="5EL5"/>
<dbReference type="PDBsum" id="5EL6"/>
<dbReference type="PDBsum" id="5EL7"/>
<dbReference type="PDBsum" id="5F8K"/>
<dbReference type="PDBsum" id="5FDU"/>
<dbReference type="PDBsum" id="5FDV"/>
<dbReference type="PDBsum" id="5HAU"/>
<dbReference type="PDBsum" id="5HCP"/>
<dbReference type="PDBsum" id="5HCQ"/>
<dbReference type="PDBsum" id="5HCR"/>
<dbReference type="PDBsum" id="5HD1"/>
<dbReference type="PDBsum" id="5IB7"/>
<dbReference type="PDBsum" id="5IB8"/>
<dbReference type="PDBsum" id="5IBB"/>
<dbReference type="PDBsum" id="5IMQ"/>
<dbReference type="PDBsum" id="5IMR"/>
<dbReference type="PDBsum" id="5J30"/>
<dbReference type="PDBsum" id="5J3C"/>
<dbReference type="PDBsum" id="5J4B"/>
<dbReference type="PDBsum" id="5J4C"/>
<dbReference type="PDBsum" id="5J8B"/>
<dbReference type="PDBsum" id="5NDJ"/>
<dbReference type="PDBsum" id="5NDK"/>
<dbReference type="PDBsum" id="5OT7"/>
<dbReference type="PDBsum" id="5UQ7"/>
<dbReference type="PDBsum" id="5UQ8"/>
<dbReference type="PDBsum" id="5VP2"/>
<dbReference type="PDBsum" id="5VPO"/>
<dbReference type="PDBsum" id="5VPP"/>
<dbReference type="PDBsum" id="5W4K"/>
<dbReference type="PDBsum" id="5WIS"/>
<dbReference type="PDBsum" id="5WIT"/>
<dbReference type="PDBsum" id="5ZLU"/>
<dbReference type="PDBsum" id="6BUW"/>
<dbReference type="PDBsum" id="6BZ6"/>
<dbReference type="PDBsum" id="6BZ7"/>
<dbReference type="PDBsum" id="6BZ8"/>
<dbReference type="PDBsum" id="6C5L"/>
<dbReference type="PDBsum" id="6CAE"/>
<dbReference type="PDBsum" id="6CFJ"/>
<dbReference type="PDBsum" id="6CFK"/>
<dbReference type="PDBsum" id="6CFL"/>
<dbReference type="PDBsum" id="6CZR"/>
<dbReference type="PDBsum" id="6FKR"/>
<dbReference type="PDBsum" id="6GSJ"/>
<dbReference type="PDBsum" id="6GSK"/>
<dbReference type="PDBsum" id="6GSL"/>
<dbReference type="PDBsum" id="6GZQ"/>
<dbReference type="PDBsum" id="6GZX"/>
<dbReference type="PDBsum" id="6GZZ"/>
<dbReference type="PDBsum" id="6N1D"/>
<dbReference type="PDBsum" id="6N9E"/>
<dbReference type="PDBsum" id="6N9F"/>
<dbReference type="PDBsum" id="6ND5"/>
<dbReference type="PDBsum" id="6ND6"/>
<dbReference type="PDBsum" id="6NDK"/>
<dbReference type="PDBsum" id="6NSH"/>
<dbReference type="PDBsum" id="6NTA"/>
<dbReference type="PDBsum" id="6NUO"/>
<dbReference type="PDBsum" id="6NWY"/>
<dbReference type="PDBsum" id="6O3M"/>
<dbReference type="PDBsum" id="6O97"/>
<dbReference type="PDBsum" id="6OF1"/>
<dbReference type="PDBsum" id="6OF6"/>
<dbReference type="PDBsum" id="6OJ2"/>
<dbReference type="PDBsum" id="6OPE"/>
<dbReference type="PDBsum" id="6ORD"/>
<dbReference type="PDBsum" id="6OSI"/>
<dbReference type="PDBsum" id="6OTR"/>
<dbReference type="PDBsum" id="6OXA"/>
<dbReference type="PDBsum" id="6OXI"/>
<dbReference type="PDBsum" id="6Q95"/>
<dbReference type="PDBsum" id="6QNQ"/>
<dbReference type="PDBsum" id="6QNR"/>
<dbReference type="PDBsum" id="6UCQ"/>
<dbReference type="PDBsum" id="6UO1"/>
<dbReference type="PDBsum" id="6XHV"/>
<dbReference type="PDBsum" id="6XHW"/>
<dbReference type="PDBsum" id="6XHX"/>
<dbReference type="PDBsum" id="6XHY"/>
<dbReference type="PDBsum" id="6XQD"/>
<dbReference type="PDBsum" id="6XQE"/>
<dbReference type="PDBsum" id="7AZO"/>
<dbReference type="PDBsum" id="7AZS"/>
<dbReference type="PDBsum" id="7JQL"/>
<dbReference type="PDBsum" id="7JQM"/>
<dbReference type="PDBsum" id="7LH5"/>
<dbReference type="PDBsum" id="7MD7"/>
<dbReference type="PDBsum" id="7RQ8"/>
<dbReference type="PDBsum" id="7RQ9"/>
<dbReference type="PDBsum" id="7RQA"/>
<dbReference type="PDBsum" id="7RQB"/>
<dbReference type="PDBsum" id="7RQC"/>
<dbReference type="PDBsum" id="7RQD"/>
<dbReference type="PDBsum" id="7RQE"/>
<dbReference type="PDBsum" id="7U2H"/>
<dbReference type="PDBsum" id="7U2I"/>
<dbReference type="PDBsum" id="7U2J"/>
<dbReference type="PDBsum" id="8CVJ"/>
<dbReference type="PDBsum" id="8CVK"/>
<dbReference type="PDBsum" id="8CVL"/>
<dbReference type="PDBsum" id="8EKB"/>
<dbReference type="PDBsum" id="8EV6"/>
<dbReference type="PDBsum" id="8EV7"/>
<dbReference type="PDBsum" id="8FC1"/>
<dbReference type="PDBsum" id="8FC2"/>
<dbReference type="PDBsum" id="8FC3"/>
<dbReference type="PDBsum" id="8FC4"/>
<dbReference type="PDBsum" id="8FC5"/>
<dbReference type="PDBsum" id="8FC6"/>
<dbReference type="PDBsum" id="8FOM"/>
<dbReference type="PDBsum" id="8FON"/>
<dbReference type="PDBsum" id="8G29"/>
<dbReference type="PDBsum" id="8G2A"/>
<dbReference type="PDBsum" id="8G2B"/>
<dbReference type="PDBsum" id="8G2C"/>
<dbReference type="PDBsum" id="8G2D"/>
<dbReference type="PDBsum" id="8T8B"/>
<dbReference type="PDBsum" id="8T8C"/>
<dbReference type="PDBsum" id="8UD6"/>
<dbReference type="PDBsum" id="8UD7"/>
<dbReference type="PDBsum" id="8UD8"/>
<dbReference type="PDBsum" id="8UVR"/>
<dbReference type="PDBsum" id="8UVS"/>
<dbReference type="PDBsum" id="8VTU"/>
<dbReference type="PDBsum" id="8VTV"/>
<dbReference type="PDBsum" id="8VTW"/>
<dbReference type="PDBsum" id="8VTX"/>
<dbReference type="PDBsum" id="8VTY"/>
<dbReference type="PDBsum" id="8WV1"/>
<dbReference type="PDBsum" id="9B00"/>
<dbReference type="PDBsum" id="9D0J"/>
<dbReference type="PDBsum" id="9D7R"/>
<dbReference type="PDBsum" id="9D7S"/>
<dbReference type="PDBsum" id="9D7T"/>
<dbReference type="PDBsum" id="9DFC"/>
<dbReference type="PDBsum" id="9DFD"/>
<dbReference type="PDBsum" id="9DFE"/>
<dbReference type="EMDB" id="EMD-0101"/>
<dbReference type="EMDB" id="EMD-0104"/>
<dbReference type="EMDB" id="EMD-0105"/>
<dbReference type="EMDB" id="EMD-3852"/>
<dbReference type="EMDB" id="EMD-4475"/>
<dbReference type="EMDB" id="EMD-6934"/>
<dbReference type="EMDB" id="EMD-8596"/>
<dbReference type="EMDB" id="EMD-8597"/>
<dbReference type="SMR" id="P80339"/>
<dbReference type="IntAct" id="P80339">
    <property type="interactions" value="8"/>
</dbReference>
<dbReference type="EnsemblBacteria" id="BAD70241">
    <property type="protein sequence ID" value="BAD70241"/>
    <property type="gene ID" value="BAD70241"/>
</dbReference>
<dbReference type="GeneID" id="3168304"/>
<dbReference type="KEGG" id="ttj:TTHA0418"/>
<dbReference type="PATRIC" id="fig|300852.9.peg.418"/>
<dbReference type="eggNOG" id="COG0333">
    <property type="taxonomic scope" value="Bacteria"/>
</dbReference>
<dbReference type="HOGENOM" id="CLU_129084_1_3_0"/>
<dbReference type="PhylomeDB" id="P80339"/>
<dbReference type="Proteomes" id="UP000000532">
    <property type="component" value="Chromosome"/>
</dbReference>
<dbReference type="GO" id="GO:0015934">
    <property type="term" value="C:large ribosomal subunit"/>
    <property type="evidence" value="ECO:0007669"/>
    <property type="project" value="InterPro"/>
</dbReference>
<dbReference type="GO" id="GO:0003735">
    <property type="term" value="F:structural constituent of ribosome"/>
    <property type="evidence" value="ECO:0007669"/>
    <property type="project" value="InterPro"/>
</dbReference>
<dbReference type="GO" id="GO:0006412">
    <property type="term" value="P:translation"/>
    <property type="evidence" value="ECO:0007669"/>
    <property type="project" value="UniProtKB-UniRule"/>
</dbReference>
<dbReference type="Gene3D" id="1.20.5.640">
    <property type="entry name" value="Single helix bin"/>
    <property type="match status" value="1"/>
</dbReference>
<dbReference type="HAMAP" id="MF_00340">
    <property type="entry name" value="Ribosomal_bL32"/>
    <property type="match status" value="1"/>
</dbReference>
<dbReference type="InterPro" id="IPR002677">
    <property type="entry name" value="Ribosomal_bL32"/>
</dbReference>
<dbReference type="InterPro" id="IPR044957">
    <property type="entry name" value="Ribosomal_bL32_bact"/>
</dbReference>
<dbReference type="InterPro" id="IPR011332">
    <property type="entry name" value="Ribosomal_zn-bd"/>
</dbReference>
<dbReference type="NCBIfam" id="TIGR01031">
    <property type="entry name" value="rpmF_bact"/>
    <property type="match status" value="1"/>
</dbReference>
<dbReference type="PANTHER" id="PTHR35534">
    <property type="entry name" value="50S RIBOSOMAL PROTEIN L32"/>
    <property type="match status" value="1"/>
</dbReference>
<dbReference type="PANTHER" id="PTHR35534:SF1">
    <property type="entry name" value="LARGE RIBOSOMAL SUBUNIT PROTEIN BL32"/>
    <property type="match status" value="1"/>
</dbReference>
<dbReference type="Pfam" id="PF01783">
    <property type="entry name" value="Ribosomal_L32p"/>
    <property type="match status" value="1"/>
</dbReference>
<dbReference type="SUPFAM" id="SSF57829">
    <property type="entry name" value="Zn-binding ribosomal proteins"/>
    <property type="match status" value="1"/>
</dbReference>
<keyword id="KW-0002">3D-structure</keyword>
<keyword id="KW-0903">Direct protein sequencing</keyword>
<keyword id="KW-1185">Reference proteome</keyword>
<keyword id="KW-0687">Ribonucleoprotein</keyword>
<keyword id="KW-0689">Ribosomal protein</keyword>
<reference key="1">
    <citation type="submission" date="2004-11" db="EMBL/GenBank/DDBJ databases">
        <title>Complete genome sequence of Thermus thermophilus HB8.</title>
        <authorList>
            <person name="Masui R."/>
            <person name="Kurokawa K."/>
            <person name="Nakagawa N."/>
            <person name="Tokunaga F."/>
            <person name="Koyama Y."/>
            <person name="Shibata T."/>
            <person name="Oshima T."/>
            <person name="Yokoyama S."/>
            <person name="Yasunaga T."/>
            <person name="Kuramitsu S."/>
        </authorList>
    </citation>
    <scope>NUCLEOTIDE SEQUENCE [LARGE SCALE GENOMIC DNA]</scope>
    <source>
        <strain>ATCC 27634 / DSM 579 / HB8</strain>
    </source>
</reference>
<reference key="2">
    <citation type="journal article" date="1995" name="Endocyt. Cell Res.">
        <title>The isolation and complete amino acid sequence of the ribosomal protein L36 from Thermus thermophilus and its zinc-binding motif.</title>
        <authorList>
            <person name="Boysen R.I."/>
            <person name="Lorenz S."/>
            <person name="Kim J.S."/>
            <person name="Schroeder W.F.K.J."/>
            <person name="Erdmann V.A."/>
        </authorList>
    </citation>
    <scope>PROTEIN SEQUENCE OF 2-41</scope>
</reference>
<reference key="3">
    <citation type="journal article" date="2000" name="Biol. Chem.">
        <title>Identification of the 50S ribosomal proteins from the eubacterium Thermus thermophilus.</title>
        <authorList>
            <person name="Katsani K.R."/>
            <person name="Tsiboli P."/>
            <person name="Anagnostopoulos K."/>
            <person name="Urlaub H."/>
            <person name="Choli-Papadopoulou T."/>
        </authorList>
    </citation>
    <scope>PROTEIN SEQUENCE OF 2-17</scope>
    <source>
        <strain>ATCC 27634 / DSM 579 / HB8</strain>
    </source>
</reference>
<reference key="4">
    <citation type="journal article" date="2005" name="Proteomics">
        <title>Extending ribosomal protein identifications to unsequenced bacterial strains using matrix-assisted laser desorption/ionization mass spectrometry.</title>
        <authorList>
            <person name="Suh M.-J."/>
            <person name="Hamburg D.M."/>
            <person name="Gregory S.T."/>
            <person name="Dahlberg A.E."/>
            <person name="Limbach P.A."/>
        </authorList>
    </citation>
    <scope>MASS SPECTROMETRY</scope>
    <source>
        <strain>ATCC 27634 / DSM 579 / HB8</strain>
    </source>
</reference>
<reference key="5">
    <citation type="journal article" date="2001" name="Science">
        <title>Crystal structure of the ribosome at 5.5 A resolution.</title>
        <authorList>
            <person name="Yusupov M.M."/>
            <person name="Yusupova G.Z."/>
            <person name="Baucom A."/>
            <person name="Lieberman K."/>
            <person name="Earnest T.N."/>
            <person name="Cate J.H.D."/>
            <person name="Noller H.F."/>
        </authorList>
    </citation>
    <scope>STRUCTURE OF THE RIBOSOME</scope>
</reference>
<reference key="6">
    <citation type="journal article" date="2008" name="Science">
        <title>Insights into translational termination from the structure of RF2 bound to the ribosome.</title>
        <authorList>
            <person name="Weixlbaumer A."/>
            <person name="Jin H."/>
            <person name="Neubauer C."/>
            <person name="Voorhees R.M."/>
            <person name="Petry S."/>
            <person name="Kelley A.C."/>
            <person name="Ramakrishnan V."/>
        </authorList>
    </citation>
    <scope>X-RAY CRYSTALLOGRAPHY (3.45 ANGSTROMS) OF 70S RIBOSOME IN COMPLEX WITH RF2</scope>
    <scope>SUBUNIT</scope>
</reference>
<reference key="7">
    <citation type="journal article" date="2010" name="Proc. Natl. Acad. Sci. U.S.A.">
        <title>Structure of the 70S ribosome bound to release factor 2 and a substrate analog provides insights into catalysis of peptide release.</title>
        <authorList>
            <person name="Jin H."/>
            <person name="Kelley A.C."/>
            <person name="Loakes D."/>
            <person name="Ramakrishnan V."/>
        </authorList>
    </citation>
    <scope>X-RAY CRYSTALLOGRAPHY (3.10 ANGSTROMS) OF 70S RIBOSOME IN COMPLEX WITH RF2</scope>
    <scope>SUBUNIT</scope>
</reference>
<sequence>MAKHPVPKKKTSKARRDARRSHHALTPPTLVPCPECKAMKPPHTVCPECGYYAGRKVLEV</sequence>
<comment type="function">
    <text>Found on the solvent side of the large subunit.</text>
</comment>
<comment type="subunit">
    <text>Part of the 50S ribosomal subunit.</text>
</comment>
<comment type="mass spectrometry"/>
<comment type="similarity">
    <text evidence="5">Belongs to the bacterial ribosomal protein bL32 family.</text>
</comment>
<name>RL32_THET8</name>
<evidence type="ECO:0000256" key="1">
    <source>
        <dbReference type="SAM" id="MobiDB-lite"/>
    </source>
</evidence>
<evidence type="ECO:0000269" key="2">
    <source>
    </source>
</evidence>
<evidence type="ECO:0000269" key="3">
    <source>
    </source>
</evidence>
<evidence type="ECO:0000269" key="4">
    <source ref="2"/>
</evidence>
<evidence type="ECO:0000305" key="5"/>
<evidence type="ECO:0007829" key="6">
    <source>
        <dbReference type="PDB" id="4WT8"/>
    </source>
</evidence>
<proteinExistence type="evidence at protein level"/>
<feature type="initiator methionine" description="Removed" evidence="2 4">
    <location>
        <position position="1"/>
    </location>
</feature>
<feature type="chain" id="PRO_0000172427" description="Large ribosomal subunit protein bL32">
    <location>
        <begin position="2"/>
        <end position="60"/>
    </location>
</feature>
<feature type="region of interest" description="Disordered" evidence="1">
    <location>
        <begin position="1"/>
        <end position="30"/>
    </location>
</feature>
<feature type="compositionally biased region" description="Basic residues" evidence="1">
    <location>
        <begin position="1"/>
        <end position="23"/>
    </location>
</feature>
<feature type="sequence conflict" description="In Ref. 3; AA sequence." evidence="5" ref="3">
    <original>D</original>
    <variation>A</variation>
    <location>
        <position position="17"/>
    </location>
</feature>
<feature type="sequence conflict" description="In Ref. 2; AA sequence." evidence="5" ref="2">
    <original>PC</original>
    <variation>VP</variation>
    <location>
        <begin position="32"/>
        <end position="33"/>
    </location>
</feature>
<feature type="sequence conflict" description="In Ref. 2; AA sequence." evidence="5" ref="2">
    <original>C</original>
    <variation>I</variation>
    <location>
        <position position="36"/>
    </location>
</feature>
<feature type="sequence conflict" description="In Ref. 2; AA sequence." evidence="5" ref="2">
    <original>P</original>
    <variation>H</variation>
    <location>
        <position position="41"/>
    </location>
</feature>
<feature type="helix" evidence="6">
    <location>
        <begin position="13"/>
        <end position="19"/>
    </location>
</feature>
<feature type="helix" evidence="6">
    <location>
        <begin position="20"/>
        <end position="23"/>
    </location>
</feature>
<feature type="strand" evidence="6">
    <location>
        <begin position="34"/>
        <end position="37"/>
    </location>
</feature>
<feature type="strand" evidence="6">
    <location>
        <begin position="52"/>
        <end position="54"/>
    </location>
</feature>
<protein>
    <recommendedName>
        <fullName evidence="5">Large ribosomal subunit protein bL32</fullName>
    </recommendedName>
    <alternativeName>
        <fullName>50S ribosomal protein L32</fullName>
    </alternativeName>
</protein>
<gene>
    <name type="primary">rpmF</name>
    <name type="synonym">rpl32</name>
    <name type="ordered locus">TTHA0418</name>
</gene>
<accession>P80339</accession>
<accession>O05480</accession>
<accession>Q5SL75</accession>
<organism>
    <name type="scientific">Thermus thermophilus (strain ATCC 27634 / DSM 579 / HB8)</name>
    <dbReference type="NCBI Taxonomy" id="300852"/>
    <lineage>
        <taxon>Bacteria</taxon>
        <taxon>Thermotogati</taxon>
        <taxon>Deinococcota</taxon>
        <taxon>Deinococci</taxon>
        <taxon>Thermales</taxon>
        <taxon>Thermaceae</taxon>
        <taxon>Thermus</taxon>
    </lineage>
</organism>